<dbReference type="EC" id="5.2.1.8" evidence="1"/>
<dbReference type="EMBL" id="AM933172">
    <property type="protein sequence ID" value="CAR32015.1"/>
    <property type="molecule type" value="Genomic_DNA"/>
</dbReference>
<dbReference type="RefSeq" id="WP_001198403.1">
    <property type="nucleotide sequence ID" value="NC_011294.1"/>
</dbReference>
<dbReference type="SMR" id="B5QTJ5"/>
<dbReference type="KEGG" id="set:SEN0429"/>
<dbReference type="HOGENOM" id="CLU_033058_2_0_6"/>
<dbReference type="Proteomes" id="UP000000613">
    <property type="component" value="Chromosome"/>
</dbReference>
<dbReference type="GO" id="GO:0005737">
    <property type="term" value="C:cytoplasm"/>
    <property type="evidence" value="ECO:0007669"/>
    <property type="project" value="UniProtKB-SubCell"/>
</dbReference>
<dbReference type="GO" id="GO:0003755">
    <property type="term" value="F:peptidyl-prolyl cis-trans isomerase activity"/>
    <property type="evidence" value="ECO:0007669"/>
    <property type="project" value="UniProtKB-UniRule"/>
</dbReference>
<dbReference type="GO" id="GO:0044183">
    <property type="term" value="F:protein folding chaperone"/>
    <property type="evidence" value="ECO:0007669"/>
    <property type="project" value="TreeGrafter"/>
</dbReference>
<dbReference type="GO" id="GO:0043022">
    <property type="term" value="F:ribosome binding"/>
    <property type="evidence" value="ECO:0007669"/>
    <property type="project" value="TreeGrafter"/>
</dbReference>
<dbReference type="GO" id="GO:0051083">
    <property type="term" value="P:'de novo' cotranslational protein folding"/>
    <property type="evidence" value="ECO:0007669"/>
    <property type="project" value="TreeGrafter"/>
</dbReference>
<dbReference type="GO" id="GO:0051301">
    <property type="term" value="P:cell division"/>
    <property type="evidence" value="ECO:0007669"/>
    <property type="project" value="UniProtKB-KW"/>
</dbReference>
<dbReference type="GO" id="GO:0061077">
    <property type="term" value="P:chaperone-mediated protein folding"/>
    <property type="evidence" value="ECO:0007669"/>
    <property type="project" value="TreeGrafter"/>
</dbReference>
<dbReference type="GO" id="GO:0015031">
    <property type="term" value="P:protein transport"/>
    <property type="evidence" value="ECO:0007669"/>
    <property type="project" value="UniProtKB-UniRule"/>
</dbReference>
<dbReference type="GO" id="GO:0043335">
    <property type="term" value="P:protein unfolding"/>
    <property type="evidence" value="ECO:0007669"/>
    <property type="project" value="TreeGrafter"/>
</dbReference>
<dbReference type="FunFam" id="1.10.3120.10:FF:000001">
    <property type="entry name" value="Trigger factor"/>
    <property type="match status" value="1"/>
</dbReference>
<dbReference type="FunFam" id="3.10.50.40:FF:000001">
    <property type="entry name" value="Trigger factor"/>
    <property type="match status" value="1"/>
</dbReference>
<dbReference type="FunFam" id="3.30.70.1050:FF:000001">
    <property type="entry name" value="Trigger factor"/>
    <property type="match status" value="1"/>
</dbReference>
<dbReference type="Gene3D" id="3.10.50.40">
    <property type="match status" value="1"/>
</dbReference>
<dbReference type="Gene3D" id="3.30.70.1050">
    <property type="entry name" value="Trigger factor ribosome-binding domain"/>
    <property type="match status" value="1"/>
</dbReference>
<dbReference type="Gene3D" id="1.10.3120.10">
    <property type="entry name" value="Trigger factor, C-terminal domain"/>
    <property type="match status" value="1"/>
</dbReference>
<dbReference type="HAMAP" id="MF_00303">
    <property type="entry name" value="Trigger_factor_Tig"/>
    <property type="match status" value="1"/>
</dbReference>
<dbReference type="InterPro" id="IPR046357">
    <property type="entry name" value="PPIase_dom_sf"/>
</dbReference>
<dbReference type="InterPro" id="IPR001179">
    <property type="entry name" value="PPIase_FKBP_dom"/>
</dbReference>
<dbReference type="InterPro" id="IPR005215">
    <property type="entry name" value="Trig_fac"/>
</dbReference>
<dbReference type="InterPro" id="IPR008880">
    <property type="entry name" value="Trigger_fac_C"/>
</dbReference>
<dbReference type="InterPro" id="IPR037041">
    <property type="entry name" value="Trigger_fac_C_sf"/>
</dbReference>
<dbReference type="InterPro" id="IPR008881">
    <property type="entry name" value="Trigger_fac_ribosome-bd_bac"/>
</dbReference>
<dbReference type="InterPro" id="IPR036611">
    <property type="entry name" value="Trigger_fac_ribosome-bd_sf"/>
</dbReference>
<dbReference type="InterPro" id="IPR027304">
    <property type="entry name" value="Trigger_fact/SurA_dom_sf"/>
</dbReference>
<dbReference type="NCBIfam" id="TIGR00115">
    <property type="entry name" value="tig"/>
    <property type="match status" value="1"/>
</dbReference>
<dbReference type="PANTHER" id="PTHR30560">
    <property type="entry name" value="TRIGGER FACTOR CHAPERONE AND PEPTIDYL-PROLYL CIS/TRANS ISOMERASE"/>
    <property type="match status" value="1"/>
</dbReference>
<dbReference type="PANTHER" id="PTHR30560:SF3">
    <property type="entry name" value="TRIGGER FACTOR-LIKE PROTEIN TIG, CHLOROPLASTIC"/>
    <property type="match status" value="1"/>
</dbReference>
<dbReference type="Pfam" id="PF00254">
    <property type="entry name" value="FKBP_C"/>
    <property type="match status" value="1"/>
</dbReference>
<dbReference type="Pfam" id="PF05698">
    <property type="entry name" value="Trigger_C"/>
    <property type="match status" value="1"/>
</dbReference>
<dbReference type="Pfam" id="PF05697">
    <property type="entry name" value="Trigger_N"/>
    <property type="match status" value="1"/>
</dbReference>
<dbReference type="PIRSF" id="PIRSF003095">
    <property type="entry name" value="Trigger_factor"/>
    <property type="match status" value="1"/>
</dbReference>
<dbReference type="SUPFAM" id="SSF54534">
    <property type="entry name" value="FKBP-like"/>
    <property type="match status" value="1"/>
</dbReference>
<dbReference type="SUPFAM" id="SSF109998">
    <property type="entry name" value="Triger factor/SurA peptide-binding domain-like"/>
    <property type="match status" value="1"/>
</dbReference>
<dbReference type="SUPFAM" id="SSF102735">
    <property type="entry name" value="Trigger factor ribosome-binding domain"/>
    <property type="match status" value="1"/>
</dbReference>
<dbReference type="PROSITE" id="PS50059">
    <property type="entry name" value="FKBP_PPIASE"/>
    <property type="match status" value="1"/>
</dbReference>
<accession>B5QTJ5</accession>
<comment type="function">
    <text evidence="1">Involved in protein export. Acts as a chaperone by maintaining the newly synthesized protein in an open conformation. Functions as a peptidyl-prolyl cis-trans isomerase.</text>
</comment>
<comment type="catalytic activity">
    <reaction evidence="1">
        <text>[protein]-peptidylproline (omega=180) = [protein]-peptidylproline (omega=0)</text>
        <dbReference type="Rhea" id="RHEA:16237"/>
        <dbReference type="Rhea" id="RHEA-COMP:10747"/>
        <dbReference type="Rhea" id="RHEA-COMP:10748"/>
        <dbReference type="ChEBI" id="CHEBI:83833"/>
        <dbReference type="ChEBI" id="CHEBI:83834"/>
        <dbReference type="EC" id="5.2.1.8"/>
    </reaction>
</comment>
<comment type="subcellular location">
    <subcellularLocation>
        <location>Cytoplasm</location>
    </subcellularLocation>
    <text evidence="1">About half TF is bound to the ribosome near the polypeptide exit tunnel while the other half is free in the cytoplasm.</text>
</comment>
<comment type="domain">
    <text evidence="1">Consists of 3 domains; the N-terminus binds the ribosome, the middle domain has PPIase activity, while the C-terminus has intrinsic chaperone activity on its own.</text>
</comment>
<comment type="similarity">
    <text evidence="1">Belongs to the FKBP-type PPIase family. Tig subfamily.</text>
</comment>
<feature type="chain" id="PRO_1000115575" description="Trigger factor">
    <location>
        <begin position="1"/>
        <end position="432"/>
    </location>
</feature>
<feature type="domain" description="PPIase FKBP-type" evidence="1">
    <location>
        <begin position="161"/>
        <end position="246"/>
    </location>
</feature>
<keyword id="KW-0131">Cell cycle</keyword>
<keyword id="KW-0132">Cell division</keyword>
<keyword id="KW-0143">Chaperone</keyword>
<keyword id="KW-0963">Cytoplasm</keyword>
<keyword id="KW-0413">Isomerase</keyword>
<keyword id="KW-0697">Rotamase</keyword>
<reference key="1">
    <citation type="journal article" date="2008" name="Genome Res.">
        <title>Comparative genome analysis of Salmonella enteritidis PT4 and Salmonella gallinarum 287/91 provides insights into evolutionary and host adaptation pathways.</title>
        <authorList>
            <person name="Thomson N.R."/>
            <person name="Clayton D.J."/>
            <person name="Windhorst D."/>
            <person name="Vernikos G."/>
            <person name="Davidson S."/>
            <person name="Churcher C."/>
            <person name="Quail M.A."/>
            <person name="Stevens M."/>
            <person name="Jones M.A."/>
            <person name="Watson M."/>
            <person name="Barron A."/>
            <person name="Layton A."/>
            <person name="Pickard D."/>
            <person name="Kingsley R.A."/>
            <person name="Bignell A."/>
            <person name="Clark L."/>
            <person name="Harris B."/>
            <person name="Ormond D."/>
            <person name="Abdellah Z."/>
            <person name="Brooks K."/>
            <person name="Cherevach I."/>
            <person name="Chillingworth T."/>
            <person name="Woodward J."/>
            <person name="Norberczak H."/>
            <person name="Lord A."/>
            <person name="Arrowsmith C."/>
            <person name="Jagels K."/>
            <person name="Moule S."/>
            <person name="Mungall K."/>
            <person name="Saunders M."/>
            <person name="Whitehead S."/>
            <person name="Chabalgoity J.A."/>
            <person name="Maskell D."/>
            <person name="Humphreys T."/>
            <person name="Roberts M."/>
            <person name="Barrow P.A."/>
            <person name="Dougan G."/>
            <person name="Parkhill J."/>
        </authorList>
    </citation>
    <scope>NUCLEOTIDE SEQUENCE [LARGE SCALE GENOMIC DNA]</scope>
    <source>
        <strain>P125109</strain>
    </source>
</reference>
<evidence type="ECO:0000255" key="1">
    <source>
        <dbReference type="HAMAP-Rule" id="MF_00303"/>
    </source>
</evidence>
<sequence length="432" mass="48050">MQVSVETTQGLGRRVTITIAADSIETAVKSELVNVAKKVRIDGFRKGKVPMNIVAQRYGASVRQDVLGDLMSRNFVDAIIKEKINPAGAPNYVPGEYKVGEDFTYSVEFEVYPEVELTGLESIEVEKPVVEVTDADVDVMLDTLRKQQATWKEKDGAADAEDRVTIDFTGSVDGEEFEGGKATDFVLAMGQGRMIPGFEDGVKGHKAGEEFTIDVTFPEEYHAENLKGKAAKFVINLKKVEERELPELTEEFIKRFGVEDGSVAGLRAEVRKNMERELKGAVRNRVKSQAIEGLVKANDIDVPAALIDSEIDVLRRQAAQRFGGNEKQALELPRELFEEQAKRRVVVGLLLGEVIRTNELKADEERVKGLIEEMASAYEDPKEVIEFYSKNKELMDNMRNVALEEQAVEAVLAKAKVSEKATSFNELMNQQA</sequence>
<name>TIG_SALEP</name>
<proteinExistence type="inferred from homology"/>
<gene>
    <name evidence="1" type="primary">tig</name>
    <name type="ordered locus">SEN0429</name>
</gene>
<protein>
    <recommendedName>
        <fullName evidence="1">Trigger factor</fullName>
        <shortName evidence="1">TF</shortName>
        <ecNumber evidence="1">5.2.1.8</ecNumber>
    </recommendedName>
    <alternativeName>
        <fullName evidence="1">PPIase</fullName>
    </alternativeName>
</protein>
<organism>
    <name type="scientific">Salmonella enteritidis PT4 (strain P125109)</name>
    <dbReference type="NCBI Taxonomy" id="550537"/>
    <lineage>
        <taxon>Bacteria</taxon>
        <taxon>Pseudomonadati</taxon>
        <taxon>Pseudomonadota</taxon>
        <taxon>Gammaproteobacteria</taxon>
        <taxon>Enterobacterales</taxon>
        <taxon>Enterobacteriaceae</taxon>
        <taxon>Salmonella</taxon>
    </lineage>
</organism>